<organismHost>
    <name type="scientific">Aves</name>
    <dbReference type="NCBI Taxonomy" id="8782"/>
</organismHost>
<organismHost>
    <name type="scientific">Homo sapiens</name>
    <name type="common">Human</name>
    <dbReference type="NCBI Taxonomy" id="9606"/>
</organismHost>
<organismHost>
    <name type="scientific">Sus scrofa</name>
    <name type="common">Pig</name>
    <dbReference type="NCBI Taxonomy" id="9823"/>
</organismHost>
<protein>
    <recommendedName>
        <fullName evidence="2">Hemagglutinin</fullName>
    </recommendedName>
    <component>
        <recommendedName>
            <fullName evidence="2">Hemagglutinin HA1 chain</fullName>
        </recommendedName>
    </component>
    <component>
        <recommendedName>
            <fullName evidence="2">Hemagglutinin HA2 chain</fullName>
        </recommendedName>
    </component>
</protein>
<evidence type="ECO:0000250" key="1">
    <source>
        <dbReference type="UniProtKB" id="Q289M7"/>
    </source>
</evidence>
<evidence type="ECO:0000255" key="2">
    <source>
        <dbReference type="HAMAP-Rule" id="MF_04072"/>
    </source>
</evidence>
<evidence type="ECO:0000305" key="3"/>
<name>HEMA_I83A1</name>
<dbReference type="EMBL" id="CY020437">
    <property type="protein sequence ID" value="ABO38340.1"/>
    <property type="molecule type" value="Viral_cRNA"/>
</dbReference>
<dbReference type="BMRB" id="A4GCH5"/>
<dbReference type="SMR" id="A4GCH5"/>
<dbReference type="GlyCosmos" id="A4GCH5">
    <property type="glycosylation" value="10 sites, No reported glycans"/>
</dbReference>
<dbReference type="PRO" id="PR:A4GCH5"/>
<dbReference type="Proteomes" id="UP000008582">
    <property type="component" value="Genome"/>
</dbReference>
<dbReference type="GO" id="GO:0020002">
    <property type="term" value="C:host cell plasma membrane"/>
    <property type="evidence" value="ECO:0007669"/>
    <property type="project" value="UniProtKB-SubCell"/>
</dbReference>
<dbReference type="GO" id="GO:0016020">
    <property type="term" value="C:membrane"/>
    <property type="evidence" value="ECO:0007669"/>
    <property type="project" value="UniProtKB-UniRule"/>
</dbReference>
<dbReference type="GO" id="GO:0019031">
    <property type="term" value="C:viral envelope"/>
    <property type="evidence" value="ECO:0007669"/>
    <property type="project" value="UniProtKB-UniRule"/>
</dbReference>
<dbReference type="GO" id="GO:0055036">
    <property type="term" value="C:virion membrane"/>
    <property type="evidence" value="ECO:0007669"/>
    <property type="project" value="UniProtKB-SubCell"/>
</dbReference>
<dbReference type="GO" id="GO:0046789">
    <property type="term" value="F:host cell surface receptor binding"/>
    <property type="evidence" value="ECO:0007669"/>
    <property type="project" value="UniProtKB-UniRule"/>
</dbReference>
<dbReference type="GO" id="GO:0075512">
    <property type="term" value="P:clathrin-dependent endocytosis of virus by host cell"/>
    <property type="evidence" value="ECO:0007669"/>
    <property type="project" value="UniProtKB-UniRule"/>
</dbReference>
<dbReference type="GO" id="GO:0039654">
    <property type="term" value="P:fusion of virus membrane with host endosome membrane"/>
    <property type="evidence" value="ECO:0007669"/>
    <property type="project" value="UniProtKB-UniRule"/>
</dbReference>
<dbReference type="GO" id="GO:0019064">
    <property type="term" value="P:fusion of virus membrane with host plasma membrane"/>
    <property type="evidence" value="ECO:0007669"/>
    <property type="project" value="InterPro"/>
</dbReference>
<dbReference type="GO" id="GO:0046761">
    <property type="term" value="P:viral budding from plasma membrane"/>
    <property type="evidence" value="ECO:0007669"/>
    <property type="project" value="UniProtKB-UniRule"/>
</dbReference>
<dbReference type="GO" id="GO:0019062">
    <property type="term" value="P:virion attachment to host cell"/>
    <property type="evidence" value="ECO:0007669"/>
    <property type="project" value="UniProtKB-KW"/>
</dbReference>
<dbReference type="FunFam" id="3.90.20.10:FF:000002">
    <property type="entry name" value="Hemagglutinin"/>
    <property type="match status" value="1"/>
</dbReference>
<dbReference type="Gene3D" id="3.90.20.10">
    <property type="match status" value="1"/>
</dbReference>
<dbReference type="Gene3D" id="3.90.209.20">
    <property type="match status" value="1"/>
</dbReference>
<dbReference type="Gene3D" id="2.10.77.10">
    <property type="entry name" value="Hemagglutinin Chain A, Domain 2"/>
    <property type="match status" value="1"/>
</dbReference>
<dbReference type="HAMAP" id="MF_04072">
    <property type="entry name" value="INFV_HEMA"/>
    <property type="match status" value="1"/>
</dbReference>
<dbReference type="InterPro" id="IPR008980">
    <property type="entry name" value="Capsid_hemagglutn"/>
</dbReference>
<dbReference type="InterPro" id="IPR013828">
    <property type="entry name" value="Hemagglutn_HA1_a/b_dom_sf"/>
</dbReference>
<dbReference type="InterPro" id="IPR000149">
    <property type="entry name" value="Hemagglutn_influenz_A"/>
</dbReference>
<dbReference type="InterPro" id="IPR001364">
    <property type="entry name" value="Hemagglutn_influenz_A/B"/>
</dbReference>
<dbReference type="Pfam" id="PF00509">
    <property type="entry name" value="Hemagglutinin"/>
    <property type="match status" value="1"/>
</dbReference>
<dbReference type="PRINTS" id="PR00330">
    <property type="entry name" value="HEMAGGLUTN1"/>
</dbReference>
<dbReference type="PRINTS" id="PR00329">
    <property type="entry name" value="HEMAGGLUTN12"/>
</dbReference>
<dbReference type="SUPFAM" id="SSF58064">
    <property type="entry name" value="Influenza hemagglutinin (stalk)"/>
    <property type="match status" value="1"/>
</dbReference>
<dbReference type="SUPFAM" id="SSF49818">
    <property type="entry name" value="Viral protein domain"/>
    <property type="match status" value="1"/>
</dbReference>
<organism>
    <name type="scientific">Influenza A virus (strain A/Chile/1/1983 H1N1)</name>
    <dbReference type="NCBI Taxonomy" id="380985"/>
    <lineage>
        <taxon>Viruses</taxon>
        <taxon>Riboviria</taxon>
        <taxon>Orthornavirae</taxon>
        <taxon>Negarnaviricota</taxon>
        <taxon>Polyploviricotina</taxon>
        <taxon>Insthoviricetes</taxon>
        <taxon>Articulavirales</taxon>
        <taxon>Orthomyxoviridae</taxon>
        <taxon>Alphainfluenzavirus</taxon>
        <taxon>Alphainfluenzavirus influenzae</taxon>
        <taxon>Influenza A virus</taxon>
    </lineage>
</organism>
<reference key="1">
    <citation type="submission" date="2007-03" db="EMBL/GenBank/DDBJ databases">
        <title>The NIAID influenza genome sequencing project.</title>
        <authorList>
            <person name="Ghedin E."/>
            <person name="Spiro D."/>
            <person name="Miller N."/>
            <person name="Zaborsky J."/>
            <person name="Feldblyum T."/>
            <person name="Subbu V."/>
            <person name="Shumway M."/>
            <person name="Sparenborg J."/>
            <person name="Groveman L."/>
            <person name="Halpin R."/>
            <person name="Sitz J."/>
            <person name="Koo H."/>
            <person name="Salzberg S.L."/>
            <person name="Webster R.G."/>
            <person name="Hoffmann E."/>
            <person name="Krauss S."/>
            <person name="Naeve C."/>
            <person name="Bao Y."/>
            <person name="Bolotov P."/>
            <person name="Dernovoy D."/>
            <person name="Kiryutin B."/>
            <person name="Lipman D.J."/>
            <person name="Tatusova T."/>
        </authorList>
    </citation>
    <scope>NUCLEOTIDE SEQUENCE [GENOMIC RNA]</scope>
</reference>
<reference key="2">
    <citation type="submission" date="2007-03" db="EMBL/GenBank/DDBJ databases">
        <authorList>
            <consortium name="The NIAID Influenza Genome Sequencing Consortium"/>
        </authorList>
    </citation>
    <scope>NUCLEOTIDE SEQUENCE [GENOMIC RNA]</scope>
</reference>
<comment type="function">
    <text evidence="2">Binds to sialic acid-containing receptors on the cell surface, bringing about the attachment of the virus particle to the cell. This attachment induces virion internalization either through clathrin-dependent endocytosis or through clathrin- and caveolin-independent pathway. Plays a major role in the determination of host range restriction and virulence. Class I viral fusion protein. Responsible for penetration of the virus into the cell cytoplasm by mediating the fusion of the membrane of the endocytosed virus particle with the endosomal membrane. Low pH in endosomes induces an irreversible conformational change in HA2, releasing the fusion hydrophobic peptide. Several trimers are required to form a competent fusion pore.</text>
</comment>
<comment type="subunit">
    <text evidence="1">Homotrimer of disulfide-linked HA1-HA2. Interacts with human CACNA1C.</text>
</comment>
<comment type="subcellular location">
    <subcellularLocation>
        <location evidence="2">Virion membrane</location>
        <topology evidence="2">Single-pass type I membrane protein</topology>
    </subcellularLocation>
    <subcellularLocation>
        <location evidence="2">Host apical cell membrane</location>
        <topology evidence="2">Single-pass type I membrane protein</topology>
    </subcellularLocation>
    <text evidence="2">Targeted to the apical plasma membrane in epithelial polarized cells through a signal present in the transmembrane domain. Associated with glycosphingolipid- and cholesterol-enriched detergent-resistant lipid rafts.</text>
</comment>
<comment type="PTM">
    <text evidence="2">Palmitoylated.</text>
</comment>
<comment type="PTM">
    <text evidence="2">In natural infection, inactive HA is matured into HA1 and HA2 outside the cell by one or more trypsin-like, arginine-specific endoprotease secreted by the bronchial epithelial cells. One identified protease that may be involved in this process is secreted in lungs by club cells.</text>
</comment>
<comment type="miscellaneous">
    <text>Major glycoprotein, comprises over 80% of the envelope proteins present in virus particle.</text>
</comment>
<comment type="miscellaneous">
    <text>The extent of infection into host organism is determined by HA. Influenza viruses bud from the apical surface of polarized epithelial cells (e.g. bronchial epithelial cells) into lumen of lungs and are therefore usually pneumotropic. The reason is that HA is cleaved by tryptase clara which is restricted to lungs. However, HAs of H5 and H7 pantropic avian viruses subtypes can be cleaved by furin and subtilisin-type enzymes, allowing the virus to grow in other organs than lungs.</text>
</comment>
<comment type="miscellaneous">
    <text evidence="3">The influenza A genome consist of 8 RNA segments. Genetic variation of hemagglutinin and/or neuraminidase genes results in the emergence of new influenza strains. The mechanism of variation can be the result of point mutations or the result of genetic reassortment between segments of two different strains.</text>
</comment>
<comment type="similarity">
    <text evidence="2">Belongs to the influenza viruses hemagglutinin family.</text>
</comment>
<gene>
    <name evidence="2" type="primary">HA</name>
</gene>
<feature type="signal peptide" evidence="2">
    <location>
        <begin position="1"/>
        <end position="17"/>
    </location>
</feature>
<feature type="chain" id="PRO_0000440501" description="Hemagglutinin" evidence="2">
    <location>
        <begin position="18"/>
        <end position="566"/>
    </location>
</feature>
<feature type="chain" id="PRO_0000372893" description="Hemagglutinin HA1 chain" evidence="2">
    <location>
        <begin position="18"/>
        <end position="343"/>
    </location>
</feature>
<feature type="chain" id="PRO_0000372894" description="Hemagglutinin HA2 chain" evidence="2">
    <location>
        <begin position="345"/>
        <end position="566"/>
    </location>
</feature>
<feature type="topological domain" description="Extracellular" evidence="2">
    <location>
        <begin position="18"/>
        <end position="529"/>
    </location>
</feature>
<feature type="transmembrane region" description="Helical" evidence="2">
    <location>
        <begin position="530"/>
        <end position="550"/>
    </location>
</feature>
<feature type="topological domain" description="Cytoplasmic" evidence="2">
    <location>
        <begin position="551"/>
        <end position="566"/>
    </location>
</feature>
<feature type="site" description="Cleavage; by host" evidence="2">
    <location>
        <begin position="344"/>
        <end position="345"/>
    </location>
</feature>
<feature type="lipid moiety-binding region" description="S-palmitoyl cysteine; by host" evidence="2">
    <location>
        <position position="555"/>
    </location>
</feature>
<feature type="lipid moiety-binding region" description="S-palmitoyl cysteine; by host" evidence="2">
    <location>
        <position position="562"/>
    </location>
</feature>
<feature type="lipid moiety-binding region" description="S-palmitoyl cysteine; by host" evidence="2">
    <location>
        <position position="565"/>
    </location>
</feature>
<feature type="glycosylation site" description="N-linked (GlcNAc...) asparagine; by host" evidence="2">
    <location>
        <position position="27"/>
    </location>
</feature>
<feature type="glycosylation site" description="N-linked (GlcNAc...) asparagine; by host" evidence="2">
    <location>
        <position position="28"/>
    </location>
</feature>
<feature type="glycosylation site" description="N-linked (GlcNAc...) asparagine; by host" evidence="2">
    <location>
        <position position="40"/>
    </location>
</feature>
<feature type="glycosylation site" description="N-linked (GlcNAc...) asparagine; by host" evidence="2">
    <location>
        <position position="104"/>
    </location>
</feature>
<feature type="glycosylation site" description="N-linked (GlcNAc...) asparagine; by host" evidence="2">
    <location>
        <position position="144"/>
    </location>
</feature>
<feature type="glycosylation site" description="N-linked (GlcNAc...) asparagine; by host" evidence="2">
    <location>
        <position position="172"/>
    </location>
</feature>
<feature type="glycosylation site" description="N-linked (GlcNAc...) asparagine; by host" evidence="2">
    <location>
        <position position="177"/>
    </location>
</feature>
<feature type="glycosylation site" description="N-linked (GlcNAc...) asparagine; by host" evidence="2">
    <location>
        <position position="286"/>
    </location>
</feature>
<feature type="glycosylation site" description="N-linked (GlcNAc...) asparagine; by host" evidence="2">
    <location>
        <position position="304"/>
    </location>
</feature>
<feature type="glycosylation site" description="N-linked (GlcNAc...) asparagine; by host" evidence="2">
    <location>
        <position position="498"/>
    </location>
</feature>
<feature type="disulfide bond" description="Interchain (between HA1 and HA2 chains)" evidence="2">
    <location>
        <begin position="21"/>
        <end position="481"/>
    </location>
</feature>
<feature type="disulfide bond" evidence="2">
    <location>
        <begin position="59"/>
        <end position="292"/>
    </location>
</feature>
<feature type="disulfide bond" evidence="2">
    <location>
        <begin position="72"/>
        <end position="84"/>
    </location>
</feature>
<feature type="disulfide bond" evidence="2">
    <location>
        <begin position="107"/>
        <end position="153"/>
    </location>
</feature>
<feature type="disulfide bond" evidence="2">
    <location>
        <begin position="296"/>
        <end position="320"/>
    </location>
</feature>
<feature type="disulfide bond" evidence="2">
    <location>
        <begin position="488"/>
        <end position="492"/>
    </location>
</feature>
<sequence length="566" mass="63552">MKAKLLVLLCALSATDADTICIGYHANNSTDTVDTVLEKNVTVTHSVNLLEDNHNGKLCKLKGIAPLQLGKCSIAGWILGNPECESLFSKKSWSYIAETPNSENGTCYPGYFADYEELREQLSSVSSFERFEIFPKESSWPKHNVTKGVTAACSHKGKSSFYRNLLWLTEKNGSYPNLSKSYVNNKEKEVLVLWGVHHPSNIEDQKTIYRKENAYVSVVSSHYNRRFTPEIAKRPKVRNQEGRINYYWTLLEPGDTIIFEANGNLIAPWYAFALSRGFGSGIITSNASMDECDAKCQTPQGAINSSLPFQNVHPVTIGECPKYVRSTKLRMVTGLRNIPSIQSRGLFGAIAGFIEGGWTGMIDGWYGYHHQNEQGSGYAADQKSTQNAINGITNKVNSIIEKMNTQFTAVGKEFNKLEKRMENLNKKVDDGFLDIWTYNAELLVLLENERTLDFHDSNVKNLYEKVKSQLKNNAKEIGNGCFEFYHKCNNECMESVKNGTYDYPKYSEESKLNREKIDGVKLESMGVYQILAIYSTVASSLVLLVSLGAISFWMCSNGSLQCRICI</sequence>
<accession>A4GCH5</accession>
<keyword id="KW-1167">Clathrin- and caveolin-independent endocytosis of virus by host</keyword>
<keyword id="KW-1165">Clathrin-mediated endocytosis of virus by host</keyword>
<keyword id="KW-1015">Disulfide bond</keyword>
<keyword id="KW-1170">Fusion of virus membrane with host endosomal membrane</keyword>
<keyword id="KW-1168">Fusion of virus membrane with host membrane</keyword>
<keyword id="KW-0325">Glycoprotein</keyword>
<keyword id="KW-0348">Hemagglutinin</keyword>
<keyword id="KW-1032">Host cell membrane</keyword>
<keyword id="KW-1043">Host membrane</keyword>
<keyword id="KW-0945">Host-virus interaction</keyword>
<keyword id="KW-0449">Lipoprotein</keyword>
<keyword id="KW-0472">Membrane</keyword>
<keyword id="KW-0564">Palmitate</keyword>
<keyword id="KW-0732">Signal</keyword>
<keyword id="KW-0812">Transmembrane</keyword>
<keyword id="KW-1133">Transmembrane helix</keyword>
<keyword id="KW-1161">Viral attachment to host cell</keyword>
<keyword id="KW-0261">Viral envelope protein</keyword>
<keyword id="KW-1162">Viral penetration into host cytoplasm</keyword>
<keyword id="KW-0946">Virion</keyword>
<keyword id="KW-1164">Virus endocytosis by host</keyword>
<keyword id="KW-1160">Virus entry into host cell</keyword>
<proteinExistence type="inferred from homology"/>